<proteinExistence type="inferred from homology"/>
<evidence type="ECO:0000255" key="1">
    <source>
        <dbReference type="HAMAP-Rule" id="MF_00188"/>
    </source>
</evidence>
<evidence type="ECO:0000256" key="2">
    <source>
        <dbReference type="SAM" id="MobiDB-lite"/>
    </source>
</evidence>
<gene>
    <name evidence="1" type="primary">htpX</name>
    <name type="ordered locus">Smed_3192</name>
</gene>
<name>HTPX_SINMW</name>
<sequence length="319" mass="34723">MNLMRTAMLLAFMTVLFMAVGYVIGGRGGMMIALVIAAGMNFFSYWNSDRMVLRMYRAQEVDERSAPEYYGIVRDLAKNAGLPMPRVYVIDSPQPNAFATGRNPENAAVAASTGLLHSLSYEEVAGVMAHELAHIQYRDTLTMTMTATLAGAISMLGNFAFFFGGNRENNNPLGFIGVLIAMIVAPLAAALVQMAISRTREYSADRRGAEICGNPLWLSSALRKIAGAAHVVHNPDAERNPATAHMFIINPLSGERMDNLFSTHPNTENRVVALERMAREMSTGSTAPVRPDNAVRKSRSVPRTGWGRGGSEPPKGPWS</sequence>
<dbReference type="EC" id="3.4.24.-" evidence="1"/>
<dbReference type="EMBL" id="CP000738">
    <property type="protein sequence ID" value="ABR62016.1"/>
    <property type="molecule type" value="Genomic_DNA"/>
</dbReference>
<dbReference type="RefSeq" id="WP_012067397.1">
    <property type="nucleotide sequence ID" value="NC_009636.1"/>
</dbReference>
<dbReference type="RefSeq" id="YP_001328851.1">
    <property type="nucleotide sequence ID" value="NC_009636.1"/>
</dbReference>
<dbReference type="STRING" id="366394.Smed_3192"/>
<dbReference type="GeneID" id="61610774"/>
<dbReference type="KEGG" id="smd:Smed_3192"/>
<dbReference type="PATRIC" id="fig|366394.8.peg.6430"/>
<dbReference type="eggNOG" id="COG0501">
    <property type="taxonomic scope" value="Bacteria"/>
</dbReference>
<dbReference type="HOGENOM" id="CLU_042266_3_0_5"/>
<dbReference type="OrthoDB" id="15218at2"/>
<dbReference type="Proteomes" id="UP000001108">
    <property type="component" value="Chromosome"/>
</dbReference>
<dbReference type="GO" id="GO:0005886">
    <property type="term" value="C:plasma membrane"/>
    <property type="evidence" value="ECO:0007669"/>
    <property type="project" value="UniProtKB-SubCell"/>
</dbReference>
<dbReference type="GO" id="GO:0004222">
    <property type="term" value="F:metalloendopeptidase activity"/>
    <property type="evidence" value="ECO:0007669"/>
    <property type="project" value="UniProtKB-UniRule"/>
</dbReference>
<dbReference type="GO" id="GO:0008270">
    <property type="term" value="F:zinc ion binding"/>
    <property type="evidence" value="ECO:0007669"/>
    <property type="project" value="UniProtKB-UniRule"/>
</dbReference>
<dbReference type="GO" id="GO:0006508">
    <property type="term" value="P:proteolysis"/>
    <property type="evidence" value="ECO:0007669"/>
    <property type="project" value="UniProtKB-KW"/>
</dbReference>
<dbReference type="CDD" id="cd07336">
    <property type="entry name" value="M48B_HtpX_like"/>
    <property type="match status" value="1"/>
</dbReference>
<dbReference type="Gene3D" id="3.30.2010.10">
    <property type="entry name" value="Metalloproteases ('zincins'), catalytic domain"/>
    <property type="match status" value="1"/>
</dbReference>
<dbReference type="HAMAP" id="MF_00188">
    <property type="entry name" value="Pept_M48_protease_HtpX"/>
    <property type="match status" value="1"/>
</dbReference>
<dbReference type="InterPro" id="IPR050083">
    <property type="entry name" value="HtpX_protease"/>
</dbReference>
<dbReference type="InterPro" id="IPR022919">
    <property type="entry name" value="Pept_M48_protease_HtpX"/>
</dbReference>
<dbReference type="InterPro" id="IPR001915">
    <property type="entry name" value="Peptidase_M48"/>
</dbReference>
<dbReference type="NCBIfam" id="NF002363">
    <property type="entry name" value="PRK01345.1"/>
    <property type="match status" value="1"/>
</dbReference>
<dbReference type="NCBIfam" id="NF002826">
    <property type="entry name" value="PRK03001.1"/>
    <property type="match status" value="1"/>
</dbReference>
<dbReference type="PANTHER" id="PTHR43221">
    <property type="entry name" value="PROTEASE HTPX"/>
    <property type="match status" value="1"/>
</dbReference>
<dbReference type="PANTHER" id="PTHR43221:SF1">
    <property type="entry name" value="PROTEASE HTPX"/>
    <property type="match status" value="1"/>
</dbReference>
<dbReference type="Pfam" id="PF01435">
    <property type="entry name" value="Peptidase_M48"/>
    <property type="match status" value="1"/>
</dbReference>
<dbReference type="PROSITE" id="PS00142">
    <property type="entry name" value="ZINC_PROTEASE"/>
    <property type="match status" value="1"/>
</dbReference>
<keyword id="KW-0997">Cell inner membrane</keyword>
<keyword id="KW-1003">Cell membrane</keyword>
<keyword id="KW-0378">Hydrolase</keyword>
<keyword id="KW-0472">Membrane</keyword>
<keyword id="KW-0479">Metal-binding</keyword>
<keyword id="KW-0482">Metalloprotease</keyword>
<keyword id="KW-0645">Protease</keyword>
<keyword id="KW-0812">Transmembrane</keyword>
<keyword id="KW-1133">Transmembrane helix</keyword>
<keyword id="KW-0862">Zinc</keyword>
<accession>A6UED6</accession>
<reference key="1">
    <citation type="submission" date="2007-06" db="EMBL/GenBank/DDBJ databases">
        <title>Complete sequence of Sinorhizobium medicae WSM419 chromosome.</title>
        <authorList>
            <consortium name="US DOE Joint Genome Institute"/>
            <person name="Copeland A."/>
            <person name="Lucas S."/>
            <person name="Lapidus A."/>
            <person name="Barry K."/>
            <person name="Glavina del Rio T."/>
            <person name="Dalin E."/>
            <person name="Tice H."/>
            <person name="Pitluck S."/>
            <person name="Chain P."/>
            <person name="Malfatti S."/>
            <person name="Shin M."/>
            <person name="Vergez L."/>
            <person name="Schmutz J."/>
            <person name="Larimer F."/>
            <person name="Land M."/>
            <person name="Hauser L."/>
            <person name="Kyrpides N."/>
            <person name="Mikhailova N."/>
            <person name="Reeve W.G."/>
            <person name="Richardson P."/>
        </authorList>
    </citation>
    <scope>NUCLEOTIDE SEQUENCE [LARGE SCALE GENOMIC DNA]</scope>
    <source>
        <strain>WSM419</strain>
    </source>
</reference>
<comment type="cofactor">
    <cofactor evidence="1">
        <name>Zn(2+)</name>
        <dbReference type="ChEBI" id="CHEBI:29105"/>
    </cofactor>
    <text evidence="1">Binds 1 zinc ion per subunit.</text>
</comment>
<comment type="subcellular location">
    <subcellularLocation>
        <location evidence="1">Cell inner membrane</location>
        <topology evidence="1">Multi-pass membrane protein</topology>
    </subcellularLocation>
</comment>
<comment type="similarity">
    <text evidence="1">Belongs to the peptidase M48B family.</text>
</comment>
<organism>
    <name type="scientific">Sinorhizobium medicae (strain WSM419)</name>
    <name type="common">Ensifer medicae</name>
    <dbReference type="NCBI Taxonomy" id="366394"/>
    <lineage>
        <taxon>Bacteria</taxon>
        <taxon>Pseudomonadati</taxon>
        <taxon>Pseudomonadota</taxon>
        <taxon>Alphaproteobacteria</taxon>
        <taxon>Hyphomicrobiales</taxon>
        <taxon>Rhizobiaceae</taxon>
        <taxon>Sinorhizobium/Ensifer group</taxon>
        <taxon>Sinorhizobium</taxon>
    </lineage>
</organism>
<protein>
    <recommendedName>
        <fullName evidence="1">Protease HtpX homolog</fullName>
        <ecNumber evidence="1">3.4.24.-</ecNumber>
    </recommendedName>
</protein>
<feature type="chain" id="PRO_1000020946" description="Protease HtpX homolog">
    <location>
        <begin position="1"/>
        <end position="319"/>
    </location>
</feature>
<feature type="transmembrane region" description="Helical" evidence="1">
    <location>
        <begin position="6"/>
        <end position="26"/>
    </location>
</feature>
<feature type="transmembrane region" description="Helical" evidence="1">
    <location>
        <begin position="28"/>
        <end position="48"/>
    </location>
</feature>
<feature type="transmembrane region" description="Helical" evidence="1">
    <location>
        <begin position="145"/>
        <end position="165"/>
    </location>
</feature>
<feature type="transmembrane region" description="Helical" evidence="1">
    <location>
        <begin position="172"/>
        <end position="192"/>
    </location>
</feature>
<feature type="region of interest" description="Disordered" evidence="2">
    <location>
        <begin position="280"/>
        <end position="319"/>
    </location>
</feature>
<feature type="active site" evidence="1">
    <location>
        <position position="131"/>
    </location>
</feature>
<feature type="binding site" evidence="1">
    <location>
        <position position="130"/>
    </location>
    <ligand>
        <name>Zn(2+)</name>
        <dbReference type="ChEBI" id="CHEBI:29105"/>
        <note>catalytic</note>
    </ligand>
</feature>
<feature type="binding site" evidence="1">
    <location>
        <position position="134"/>
    </location>
    <ligand>
        <name>Zn(2+)</name>
        <dbReference type="ChEBI" id="CHEBI:29105"/>
        <note>catalytic</note>
    </ligand>
</feature>
<feature type="binding site" evidence="1">
    <location>
        <position position="201"/>
    </location>
    <ligand>
        <name>Zn(2+)</name>
        <dbReference type="ChEBI" id="CHEBI:29105"/>
        <note>catalytic</note>
    </ligand>
</feature>